<gene>
    <name evidence="1" type="primary">aroA</name>
    <name type="ordered locus">aq_1536</name>
</gene>
<proteinExistence type="inferred from homology"/>
<evidence type="ECO:0000255" key="1">
    <source>
        <dbReference type="HAMAP-Rule" id="MF_00210"/>
    </source>
</evidence>
<evidence type="ECO:0000305" key="2"/>
<name>AROA_AQUAE</name>
<organism>
    <name type="scientific">Aquifex aeolicus (strain VF5)</name>
    <dbReference type="NCBI Taxonomy" id="224324"/>
    <lineage>
        <taxon>Bacteria</taxon>
        <taxon>Pseudomonadati</taxon>
        <taxon>Aquificota</taxon>
        <taxon>Aquificia</taxon>
        <taxon>Aquificales</taxon>
        <taxon>Aquificaceae</taxon>
        <taxon>Aquifex</taxon>
    </lineage>
</organism>
<feature type="chain" id="PRO_0000088217" description="3-phosphoshikimate 1-carboxyvinyltransferase">
    <location>
        <begin position="1"/>
        <end position="431"/>
    </location>
</feature>
<feature type="active site" description="Proton acceptor" evidence="1">
    <location>
        <position position="317"/>
    </location>
</feature>
<feature type="binding site" evidence="1">
    <location>
        <position position="20"/>
    </location>
    <ligand>
        <name>3-phosphoshikimate</name>
        <dbReference type="ChEBI" id="CHEBI:145989"/>
    </ligand>
</feature>
<feature type="binding site" evidence="1">
    <location>
        <position position="20"/>
    </location>
    <ligand>
        <name>phosphoenolpyruvate</name>
        <dbReference type="ChEBI" id="CHEBI:58702"/>
    </ligand>
</feature>
<feature type="binding site" evidence="1">
    <location>
        <position position="21"/>
    </location>
    <ligand>
        <name>3-phosphoshikimate</name>
        <dbReference type="ChEBI" id="CHEBI:145989"/>
    </ligand>
</feature>
<feature type="binding site" evidence="1">
    <location>
        <position position="25"/>
    </location>
    <ligand>
        <name>3-phosphoshikimate</name>
        <dbReference type="ChEBI" id="CHEBI:145989"/>
    </ligand>
</feature>
<feature type="binding site" evidence="1">
    <location>
        <position position="91"/>
    </location>
    <ligand>
        <name>phosphoenolpyruvate</name>
        <dbReference type="ChEBI" id="CHEBI:58702"/>
    </ligand>
</feature>
<feature type="binding site" evidence="1">
    <location>
        <position position="119"/>
    </location>
    <ligand>
        <name>phosphoenolpyruvate</name>
        <dbReference type="ChEBI" id="CHEBI:58702"/>
    </ligand>
</feature>
<feature type="binding site" evidence="1">
    <location>
        <position position="164"/>
    </location>
    <ligand>
        <name>3-phosphoshikimate</name>
        <dbReference type="ChEBI" id="CHEBI:145989"/>
    </ligand>
</feature>
<feature type="binding site" evidence="1">
    <location>
        <position position="166"/>
    </location>
    <ligand>
        <name>3-phosphoshikimate</name>
        <dbReference type="ChEBI" id="CHEBI:145989"/>
    </ligand>
</feature>
<feature type="binding site" evidence="1">
    <location>
        <position position="166"/>
    </location>
    <ligand>
        <name>phosphoenolpyruvate</name>
        <dbReference type="ChEBI" id="CHEBI:58702"/>
    </ligand>
</feature>
<feature type="binding site" evidence="1">
    <location>
        <position position="317"/>
    </location>
    <ligand>
        <name>3-phosphoshikimate</name>
        <dbReference type="ChEBI" id="CHEBI:145989"/>
    </ligand>
</feature>
<feature type="binding site" evidence="1">
    <location>
        <position position="344"/>
    </location>
    <ligand>
        <name>3-phosphoshikimate</name>
        <dbReference type="ChEBI" id="CHEBI:145989"/>
    </ligand>
</feature>
<feature type="binding site" evidence="1">
    <location>
        <position position="348"/>
    </location>
    <ligand>
        <name>phosphoenolpyruvate</name>
        <dbReference type="ChEBI" id="CHEBI:58702"/>
    </ligand>
</feature>
<feature type="binding site" evidence="1">
    <location>
        <position position="390"/>
    </location>
    <ligand>
        <name>phosphoenolpyruvate</name>
        <dbReference type="ChEBI" id="CHEBI:58702"/>
    </ligand>
</feature>
<reference key="1">
    <citation type="journal article" date="1998" name="Nature">
        <title>The complete genome of the hyperthermophilic bacterium Aquifex aeolicus.</title>
        <authorList>
            <person name="Deckert G."/>
            <person name="Warren P.V."/>
            <person name="Gaasterland T."/>
            <person name="Young W.G."/>
            <person name="Lenox A.L."/>
            <person name="Graham D.E."/>
            <person name="Overbeek R."/>
            <person name="Snead M.A."/>
            <person name="Keller M."/>
            <person name="Aujay M."/>
            <person name="Huber R."/>
            <person name="Feldman R.A."/>
            <person name="Short J.M."/>
            <person name="Olsen G.J."/>
            <person name="Swanson R.V."/>
        </authorList>
    </citation>
    <scope>NUCLEOTIDE SEQUENCE [LARGE SCALE GENOMIC DNA]</scope>
    <source>
        <strain>VF5</strain>
    </source>
</reference>
<sequence length="431" mass="47793">MKKIEKIKRVKGELRVPSDKSITHRAFILGALASGETLVRKPLISGDTLATLEILKAIRTKVREGKEEVLIEGRNYTFLEPHDVLDAKNSGTTARIMSGVLSTQPFFSVLTGDESLKNRPMLRVVEPLREMGAKIDGREEGNKLPIAIRGGNLKGISYFNKKSSAQVKSALLLAGLRAEGMTEVVEPYLSRDHTERMLKLFGAEVITIPEERGHIVKIKGGQELQGTEVYCPADPSSAAYFAALATLAPEGEIRLKEVLLNPTRDGFYRKLIEMGGDISFENYRELSNEPMADLVVRPVDNLKPVKVSPEEVPTLIDEIPILAVLMAFADGVSEVKGAKELRYKESDRIKAIVTNLRKLGVQVEEFEDGFAIHGTKEIKGGVIETFKDHRIAMAFAVLGLVVEEEVIIDHPECVTVSYPEFWEDILKVVEF</sequence>
<accession>O67494</accession>
<protein>
    <recommendedName>
        <fullName evidence="1">3-phosphoshikimate 1-carboxyvinyltransferase</fullName>
        <ecNumber evidence="1">2.5.1.19</ecNumber>
    </recommendedName>
    <alternativeName>
        <fullName evidence="1">5-enolpyruvylshikimate-3-phosphate synthase</fullName>
        <shortName evidence="1">EPSP synthase</shortName>
        <shortName evidence="1">EPSPS</shortName>
    </alternativeName>
</protein>
<comment type="function">
    <text evidence="1">Catalyzes the transfer of the enolpyruvyl moiety of phosphoenolpyruvate (PEP) to the 5-hydroxyl of shikimate-3-phosphate (S3P) to produce enolpyruvyl shikimate-3-phosphate and inorganic phosphate.</text>
</comment>
<comment type="catalytic activity">
    <reaction evidence="1">
        <text>3-phosphoshikimate + phosphoenolpyruvate = 5-O-(1-carboxyvinyl)-3-phosphoshikimate + phosphate</text>
        <dbReference type="Rhea" id="RHEA:21256"/>
        <dbReference type="ChEBI" id="CHEBI:43474"/>
        <dbReference type="ChEBI" id="CHEBI:57701"/>
        <dbReference type="ChEBI" id="CHEBI:58702"/>
        <dbReference type="ChEBI" id="CHEBI:145989"/>
        <dbReference type="EC" id="2.5.1.19"/>
    </reaction>
    <physiologicalReaction direction="left-to-right" evidence="1">
        <dbReference type="Rhea" id="RHEA:21257"/>
    </physiologicalReaction>
</comment>
<comment type="pathway">
    <text evidence="1">Metabolic intermediate biosynthesis; chorismate biosynthesis; chorismate from D-erythrose 4-phosphate and phosphoenolpyruvate: step 6/7.</text>
</comment>
<comment type="subunit">
    <text evidence="1">Monomer.</text>
</comment>
<comment type="subcellular location">
    <subcellularLocation>
        <location evidence="1">Cytoplasm</location>
    </subcellularLocation>
</comment>
<comment type="similarity">
    <text evidence="1 2">Belongs to the EPSP synthase family.</text>
</comment>
<keyword id="KW-0028">Amino-acid biosynthesis</keyword>
<keyword id="KW-0057">Aromatic amino acid biosynthesis</keyword>
<keyword id="KW-0963">Cytoplasm</keyword>
<keyword id="KW-1185">Reference proteome</keyword>
<keyword id="KW-0808">Transferase</keyword>
<dbReference type="EC" id="2.5.1.19" evidence="1"/>
<dbReference type="EMBL" id="AE000657">
    <property type="protein sequence ID" value="AAC07443.1"/>
    <property type="molecule type" value="Genomic_DNA"/>
</dbReference>
<dbReference type="PIR" id="D70433">
    <property type="entry name" value="D70433"/>
</dbReference>
<dbReference type="RefSeq" id="NP_214059.1">
    <property type="nucleotide sequence ID" value="NC_000918.1"/>
</dbReference>
<dbReference type="RefSeq" id="WP_010880997.1">
    <property type="nucleotide sequence ID" value="NC_000918.1"/>
</dbReference>
<dbReference type="SMR" id="O67494"/>
<dbReference type="FunCoup" id="O67494">
    <property type="interactions" value="426"/>
</dbReference>
<dbReference type="STRING" id="224324.aq_1536"/>
<dbReference type="EnsemblBacteria" id="AAC07443">
    <property type="protein sequence ID" value="AAC07443"/>
    <property type="gene ID" value="aq_1536"/>
</dbReference>
<dbReference type="KEGG" id="aae:aq_1536"/>
<dbReference type="PATRIC" id="fig|224324.8.peg.1193"/>
<dbReference type="eggNOG" id="COG0128">
    <property type="taxonomic scope" value="Bacteria"/>
</dbReference>
<dbReference type="HOGENOM" id="CLU_024321_0_1_0"/>
<dbReference type="InParanoid" id="O67494"/>
<dbReference type="OrthoDB" id="9809920at2"/>
<dbReference type="UniPathway" id="UPA00053">
    <property type="reaction ID" value="UER00089"/>
</dbReference>
<dbReference type="Proteomes" id="UP000000798">
    <property type="component" value="Chromosome"/>
</dbReference>
<dbReference type="GO" id="GO:0005737">
    <property type="term" value="C:cytoplasm"/>
    <property type="evidence" value="ECO:0007669"/>
    <property type="project" value="UniProtKB-SubCell"/>
</dbReference>
<dbReference type="GO" id="GO:0003866">
    <property type="term" value="F:3-phosphoshikimate 1-carboxyvinyltransferase activity"/>
    <property type="evidence" value="ECO:0000318"/>
    <property type="project" value="GO_Central"/>
</dbReference>
<dbReference type="GO" id="GO:0008652">
    <property type="term" value="P:amino acid biosynthetic process"/>
    <property type="evidence" value="ECO:0007669"/>
    <property type="project" value="UniProtKB-KW"/>
</dbReference>
<dbReference type="GO" id="GO:0009073">
    <property type="term" value="P:aromatic amino acid family biosynthetic process"/>
    <property type="evidence" value="ECO:0007669"/>
    <property type="project" value="UniProtKB-KW"/>
</dbReference>
<dbReference type="GO" id="GO:0009423">
    <property type="term" value="P:chorismate biosynthetic process"/>
    <property type="evidence" value="ECO:0000318"/>
    <property type="project" value="GO_Central"/>
</dbReference>
<dbReference type="CDD" id="cd01556">
    <property type="entry name" value="EPSP_synthase"/>
    <property type="match status" value="1"/>
</dbReference>
<dbReference type="FunFam" id="3.65.10.10:FF:000005">
    <property type="entry name" value="3-phosphoshikimate 1-carboxyvinyltransferase"/>
    <property type="match status" value="1"/>
</dbReference>
<dbReference type="FunFam" id="3.65.10.10:FF:000006">
    <property type="entry name" value="3-phosphoshikimate 1-carboxyvinyltransferase"/>
    <property type="match status" value="1"/>
</dbReference>
<dbReference type="Gene3D" id="3.65.10.10">
    <property type="entry name" value="Enolpyruvate transferase domain"/>
    <property type="match status" value="2"/>
</dbReference>
<dbReference type="HAMAP" id="MF_00210">
    <property type="entry name" value="EPSP_synth"/>
    <property type="match status" value="1"/>
</dbReference>
<dbReference type="InterPro" id="IPR001986">
    <property type="entry name" value="Enolpyruvate_Tfrase_dom"/>
</dbReference>
<dbReference type="InterPro" id="IPR036968">
    <property type="entry name" value="Enolpyruvate_Tfrase_sf"/>
</dbReference>
<dbReference type="InterPro" id="IPR006264">
    <property type="entry name" value="EPSP_synthase"/>
</dbReference>
<dbReference type="InterPro" id="IPR023193">
    <property type="entry name" value="EPSP_synthase_CS"/>
</dbReference>
<dbReference type="InterPro" id="IPR013792">
    <property type="entry name" value="RNA3'P_cycl/enolpyr_Trfase_a/b"/>
</dbReference>
<dbReference type="NCBIfam" id="TIGR01356">
    <property type="entry name" value="aroA"/>
    <property type="match status" value="1"/>
</dbReference>
<dbReference type="PANTHER" id="PTHR21090">
    <property type="entry name" value="AROM/DEHYDROQUINATE SYNTHASE"/>
    <property type="match status" value="1"/>
</dbReference>
<dbReference type="PANTHER" id="PTHR21090:SF5">
    <property type="entry name" value="PENTAFUNCTIONAL AROM POLYPEPTIDE"/>
    <property type="match status" value="1"/>
</dbReference>
<dbReference type="Pfam" id="PF00275">
    <property type="entry name" value="EPSP_synthase"/>
    <property type="match status" value="1"/>
</dbReference>
<dbReference type="PIRSF" id="PIRSF000505">
    <property type="entry name" value="EPSPS"/>
    <property type="match status" value="1"/>
</dbReference>
<dbReference type="SUPFAM" id="SSF55205">
    <property type="entry name" value="EPT/RTPC-like"/>
    <property type="match status" value="1"/>
</dbReference>
<dbReference type="PROSITE" id="PS00104">
    <property type="entry name" value="EPSP_SYNTHASE_1"/>
    <property type="match status" value="1"/>
</dbReference>
<dbReference type="PROSITE" id="PS00885">
    <property type="entry name" value="EPSP_SYNTHASE_2"/>
    <property type="match status" value="1"/>
</dbReference>